<dbReference type="EMBL" id="M14119">
    <property type="protein sequence ID" value="AAA46931.1"/>
    <property type="status" value="ALT_SEQ"/>
    <property type="molecule type" value="Genomic_DNA"/>
</dbReference>
<dbReference type="PIR" id="A03675">
    <property type="entry name" value="W4WL11"/>
</dbReference>
<dbReference type="Proteomes" id="UP000008222">
    <property type="component" value="Genome"/>
</dbReference>
<dbReference type="GO" id="GO:0030430">
    <property type="term" value="C:host cell cytoplasm"/>
    <property type="evidence" value="ECO:0007669"/>
    <property type="project" value="UniProtKB-SubCell"/>
</dbReference>
<dbReference type="GO" id="GO:0042025">
    <property type="term" value="C:host cell nucleus"/>
    <property type="evidence" value="ECO:0007669"/>
    <property type="project" value="UniProtKB-SubCell"/>
</dbReference>
<dbReference type="GO" id="GO:0039592">
    <property type="term" value="P:symbiont-mediated arrest of host cell cycle during G2/M transition"/>
    <property type="evidence" value="ECO:0007669"/>
    <property type="project" value="UniProtKB-KW"/>
</dbReference>
<dbReference type="InterPro" id="IPR003861">
    <property type="entry name" value="Papilloma_E4"/>
</dbReference>
<dbReference type="Pfam" id="PF02711">
    <property type="entry name" value="Pap_E4"/>
    <property type="match status" value="1"/>
</dbReference>
<organism>
    <name type="scientific">Human papillomavirus 11</name>
    <dbReference type="NCBI Taxonomy" id="10580"/>
    <lineage>
        <taxon>Viruses</taxon>
        <taxon>Monodnaviria</taxon>
        <taxon>Shotokuvirae</taxon>
        <taxon>Cossaviricota</taxon>
        <taxon>Papovaviricetes</taxon>
        <taxon>Zurhausenvirales</taxon>
        <taxon>Papillomaviridae</taxon>
        <taxon>Firstpapillomavirinae</taxon>
        <taxon>Alphapapillomavirus</taxon>
        <taxon>Alphapapillomavirus 10</taxon>
    </lineage>
</organism>
<keyword id="KW-0244">Early protein</keyword>
<keyword id="KW-1035">Host cytoplasm</keyword>
<keyword id="KW-1079">Host G2/M cell cycle arrest by virus</keyword>
<keyword id="KW-1048">Host nucleus</keyword>
<keyword id="KW-0945">Host-virus interaction</keyword>
<keyword id="KW-1121">Modulation of host cell cycle by virus</keyword>
<keyword id="KW-0597">Phosphoprotein</keyword>
<keyword id="KW-1185">Reference proteome</keyword>
<reference key="1">
    <citation type="journal article" date="1986" name="Virology">
        <title>The nucleotide sequence and genome organization of human papilloma virus type 11.</title>
        <authorList>
            <person name="Dartmann K."/>
            <person name="Schwarz E."/>
            <person name="Gissmann L."/>
            <person name="zur Hausen H."/>
        </authorList>
    </citation>
    <scope>NUCLEOTIDE SEQUENCE [GENOMIC DNA]</scope>
</reference>
<feature type="chain" id="PRO_0000133263" description="Protein E4">
    <location>
        <begin position="1"/>
        <end position="90"/>
    </location>
</feature>
<gene>
    <name type="primary">E4</name>
</gene>
<comment type="function">
    <text evidence="1">Contributes to multiple aspects of the viral life cycle including viral genome amplification, suppression of suprabasal cell differentiation and egress of newly formed virions. Induces host cell cycle arrest at the G2 phase by associating with and preventing the nuclear entry of host CDK1/cyclin B1 complexes. Inhibits cellular DNA replication by preventing loading of host replication licensing proteins MCM2 and MCM7 onto chromatin. Within the cytoplasm, associates with host kinase SRPK1, a splicing factor regulator, and inhibits its activity. Therefore, E4 favors expression of late viral transcripts by inhibiting SRPK1-mediated phosphorylation of host serine-arginine (SR) proteins that have critical roles in mRNA metabolism. Late in the infectious cycle, E4 also acts to diminish the integrity of the keratinocyte by disrupting the keratin cytoskeleton and inducing apoptosis through alteration of mitochondrial function to facilitate egress of the newly formed virions.</text>
</comment>
<comment type="subunit">
    <text evidence="1">Assembles into oligomeric complexes. Interacts with host CDK1. Interacts with host SRPK1; this interaction may favor expression of late viral transcripts. Interacts with host cytokeratin components KRT8 and KRT18.</text>
</comment>
<comment type="subcellular location">
    <subcellularLocation>
        <location evidence="1">Host cytoplasm</location>
    </subcellularLocation>
    <subcellularLocation>
        <location evidence="1">Host nucleus</location>
    </subcellularLocation>
</comment>
<comment type="PTM">
    <text evidence="1">Phosphorylated by host ERK. The phosphorylation triggers a structural change that enhances keratin binding and protein stability.</text>
</comment>
<comment type="miscellaneous">
    <text evidence="1">The major E4 form is first synthesized as an E1^E4 fusion protein from spliced E1^E4 transcripts, such that the first few amino acids of the E4 protein are derived from the N terminus of E1.</text>
</comment>
<comment type="similarity">
    <text evidence="2">Belongs to the papillomaviridae E4 protein family.</text>
</comment>
<protein>
    <recommendedName>
        <fullName>Protein E4</fullName>
    </recommendedName>
</protein>
<organismHost>
    <name type="scientific">Homo sapiens</name>
    <name type="common">Human</name>
    <dbReference type="NCBI Taxonomy" id="9606"/>
</organismHost>
<proteinExistence type="inferred from homology"/>
<accession>P04016</accession>
<sequence length="90" mass="10033">MADDSALYEKYPLLNLLHTPPHRPPPLQCPPAPRKTACRRRLGSEHVDRPLTTPCVWPTSDPWTVQSTTSSLTITTSTKEGTTVTVQLRL</sequence>
<evidence type="ECO:0000250" key="1">
    <source>
        <dbReference type="UniProtKB" id="P06922"/>
    </source>
</evidence>
<evidence type="ECO:0000305" key="2"/>
<name>VE4_HPV11</name>